<name>R23A1_ARATH</name>
<organism>
    <name type="scientific">Arabidopsis thaliana</name>
    <name type="common">Mouse-ear cress</name>
    <dbReference type="NCBI Taxonomy" id="3702"/>
    <lineage>
        <taxon>Eukaryota</taxon>
        <taxon>Viridiplantae</taxon>
        <taxon>Streptophyta</taxon>
        <taxon>Embryophyta</taxon>
        <taxon>Tracheophyta</taxon>
        <taxon>Spermatophyta</taxon>
        <taxon>Magnoliopsida</taxon>
        <taxon>eudicotyledons</taxon>
        <taxon>Gunneridae</taxon>
        <taxon>Pentapetalae</taxon>
        <taxon>rosids</taxon>
        <taxon>malvids</taxon>
        <taxon>Brassicales</taxon>
        <taxon>Brassicaceae</taxon>
        <taxon>Camelineae</taxon>
        <taxon>Arabidopsis</taxon>
    </lineage>
</organism>
<reference key="1">
    <citation type="submission" date="1997-11" db="EMBL/GenBank/DDBJ databases">
        <authorList>
            <person name="Bonham-Smith P.C."/>
        </authorList>
    </citation>
    <scope>NUCLEOTIDE SEQUENCE [MRNA]</scope>
    <source>
        <strain>cv. Columbia</strain>
    </source>
</reference>
<reference key="2">
    <citation type="journal article" date="1999" name="Nature">
        <title>Sequence and analysis of chromosome 2 of the plant Arabidopsis thaliana.</title>
        <authorList>
            <person name="Lin X."/>
            <person name="Kaul S."/>
            <person name="Rounsley S.D."/>
            <person name="Shea T.P."/>
            <person name="Benito M.-I."/>
            <person name="Town C.D."/>
            <person name="Fujii C.Y."/>
            <person name="Mason T.M."/>
            <person name="Bowman C.L."/>
            <person name="Barnstead M.E."/>
            <person name="Feldblyum T.V."/>
            <person name="Buell C.R."/>
            <person name="Ketchum K.A."/>
            <person name="Lee J.J."/>
            <person name="Ronning C.M."/>
            <person name="Koo H.L."/>
            <person name="Moffat K.S."/>
            <person name="Cronin L.A."/>
            <person name="Shen M."/>
            <person name="Pai G."/>
            <person name="Van Aken S."/>
            <person name="Umayam L."/>
            <person name="Tallon L.J."/>
            <person name="Gill J.E."/>
            <person name="Adams M.D."/>
            <person name="Carrera A.J."/>
            <person name="Creasy T.H."/>
            <person name="Goodman H.M."/>
            <person name="Somerville C.R."/>
            <person name="Copenhaver G.P."/>
            <person name="Preuss D."/>
            <person name="Nierman W.C."/>
            <person name="White O."/>
            <person name="Eisen J.A."/>
            <person name="Salzberg S.L."/>
            <person name="Fraser C.M."/>
            <person name="Venter J.C."/>
        </authorList>
    </citation>
    <scope>NUCLEOTIDE SEQUENCE [LARGE SCALE GENOMIC DNA]</scope>
    <source>
        <strain>cv. Columbia</strain>
    </source>
</reference>
<reference key="3">
    <citation type="journal article" date="2017" name="Plant J.">
        <title>Araport11: a complete reannotation of the Arabidopsis thaliana reference genome.</title>
        <authorList>
            <person name="Cheng C.Y."/>
            <person name="Krishnakumar V."/>
            <person name="Chan A.P."/>
            <person name="Thibaud-Nissen F."/>
            <person name="Schobel S."/>
            <person name="Town C.D."/>
        </authorList>
    </citation>
    <scope>GENOME REANNOTATION</scope>
    <source>
        <strain>cv. Columbia</strain>
    </source>
</reference>
<reference key="4">
    <citation type="journal article" date="2003" name="Science">
        <title>Empirical analysis of transcriptional activity in the Arabidopsis genome.</title>
        <authorList>
            <person name="Yamada K."/>
            <person name="Lim J."/>
            <person name="Dale J.M."/>
            <person name="Chen H."/>
            <person name="Shinn P."/>
            <person name="Palm C.J."/>
            <person name="Southwick A.M."/>
            <person name="Wu H.C."/>
            <person name="Kim C.J."/>
            <person name="Nguyen M."/>
            <person name="Pham P.K."/>
            <person name="Cheuk R.F."/>
            <person name="Karlin-Newmann G."/>
            <person name="Liu S.X."/>
            <person name="Lam B."/>
            <person name="Sakano H."/>
            <person name="Wu T."/>
            <person name="Yu G."/>
            <person name="Miranda M."/>
            <person name="Quach H.L."/>
            <person name="Tripp M."/>
            <person name="Chang C.H."/>
            <person name="Lee J.M."/>
            <person name="Toriumi M.J."/>
            <person name="Chan M.M."/>
            <person name="Tang C.C."/>
            <person name="Onodera C.S."/>
            <person name="Deng J.M."/>
            <person name="Akiyama K."/>
            <person name="Ansari Y."/>
            <person name="Arakawa T."/>
            <person name="Banh J."/>
            <person name="Banno F."/>
            <person name="Bowser L."/>
            <person name="Brooks S.Y."/>
            <person name="Carninci P."/>
            <person name="Chao Q."/>
            <person name="Choy N."/>
            <person name="Enju A."/>
            <person name="Goldsmith A.D."/>
            <person name="Gurjal M."/>
            <person name="Hansen N.F."/>
            <person name="Hayashizaki Y."/>
            <person name="Johnson-Hopson C."/>
            <person name="Hsuan V.W."/>
            <person name="Iida K."/>
            <person name="Karnes M."/>
            <person name="Khan S."/>
            <person name="Koesema E."/>
            <person name="Ishida J."/>
            <person name="Jiang P.X."/>
            <person name="Jones T."/>
            <person name="Kawai J."/>
            <person name="Kamiya A."/>
            <person name="Meyers C."/>
            <person name="Nakajima M."/>
            <person name="Narusaka M."/>
            <person name="Seki M."/>
            <person name="Sakurai T."/>
            <person name="Satou M."/>
            <person name="Tamse R."/>
            <person name="Vaysberg M."/>
            <person name="Wallender E.K."/>
            <person name="Wong C."/>
            <person name="Yamamura Y."/>
            <person name="Yuan S."/>
            <person name="Shinozaki K."/>
            <person name="Davis R.W."/>
            <person name="Theologis A."/>
            <person name="Ecker J.R."/>
        </authorList>
    </citation>
    <scope>NUCLEOTIDE SEQUENCE [LARGE SCALE MRNA]</scope>
    <source>
        <strain>cv. Columbia</strain>
    </source>
</reference>
<reference key="5">
    <citation type="submission" date="2002-03" db="EMBL/GenBank/DDBJ databases">
        <title>Full-length cDNA from Arabidopsis thaliana.</title>
        <authorList>
            <person name="Brover V.V."/>
            <person name="Troukhan M.E."/>
            <person name="Alexandrov N.A."/>
            <person name="Lu Y.-P."/>
            <person name="Flavell R.B."/>
            <person name="Feldmann K.A."/>
        </authorList>
    </citation>
    <scope>NUCLEOTIDE SEQUENCE [LARGE SCALE MRNA]</scope>
</reference>
<reference key="6">
    <citation type="journal article" date="2001" name="Plant Mol. Biol.">
        <title>Establishment of Arabidopsis thaliana ribosomal protein RPL23A-1 as a functional homologue of Saccharomyces cerevisiae ribosomal protein L25.</title>
        <authorList>
            <person name="McIntosh K.B."/>
            <person name="Bonham-Smith P.C."/>
        </authorList>
    </citation>
    <scope>FUNCTION</scope>
</reference>
<reference key="7">
    <citation type="journal article" date="2001" name="Plant Physiol.">
        <title>The organization of cytoplasmic ribosomal protein genes in the Arabidopsis genome.</title>
        <authorList>
            <person name="Barakat A."/>
            <person name="Szick-Miranda K."/>
            <person name="Chang I.-F."/>
            <person name="Guyot R."/>
            <person name="Blanc G."/>
            <person name="Cooke R."/>
            <person name="Delseny M."/>
            <person name="Bailey-Serres J."/>
        </authorList>
    </citation>
    <scope>GENE FAMILY ORGANIZATION</scope>
    <scope>NOMENCLATURE</scope>
</reference>
<reference key="8">
    <citation type="journal article" date="2023" name="Plant Cell">
        <title>An updated nomenclature for plant ribosomal protein genes.</title>
        <authorList>
            <person name="Scarpin M.R."/>
            <person name="Busche M."/>
            <person name="Martinez R.E."/>
            <person name="Harper L.C."/>
            <person name="Reiser L."/>
            <person name="Szakonyi D."/>
            <person name="Merchante C."/>
            <person name="Lan T."/>
            <person name="Xiong W."/>
            <person name="Mo B."/>
            <person name="Tang G."/>
            <person name="Chen X."/>
            <person name="Bailey-Serres J."/>
            <person name="Browning K.S."/>
            <person name="Brunkard J.O."/>
        </authorList>
    </citation>
    <scope>NOMENCLATURE</scope>
</reference>
<dbReference type="EMBL" id="AF034694">
    <property type="protein sequence ID" value="AAB87692.1"/>
    <property type="molecule type" value="mRNA"/>
</dbReference>
<dbReference type="EMBL" id="AC004218">
    <property type="protein sequence ID" value="AAC27837.1"/>
    <property type="molecule type" value="Genomic_DNA"/>
</dbReference>
<dbReference type="EMBL" id="CP002685">
    <property type="protein sequence ID" value="AEC09680.1"/>
    <property type="molecule type" value="Genomic_DNA"/>
</dbReference>
<dbReference type="EMBL" id="CP002685">
    <property type="protein sequence ID" value="AEC09681.1"/>
    <property type="molecule type" value="Genomic_DNA"/>
</dbReference>
<dbReference type="EMBL" id="AF325056">
    <property type="protein sequence ID" value="AAG40408.1"/>
    <property type="molecule type" value="mRNA"/>
</dbReference>
<dbReference type="EMBL" id="AY037235">
    <property type="protein sequence ID" value="AAK59835.1"/>
    <property type="molecule type" value="mRNA"/>
</dbReference>
<dbReference type="EMBL" id="AY039850">
    <property type="protein sequence ID" value="AAK63954.1"/>
    <property type="molecule type" value="mRNA"/>
</dbReference>
<dbReference type="EMBL" id="AY060540">
    <property type="protein sequence ID" value="AAL31171.1"/>
    <property type="molecule type" value="mRNA"/>
</dbReference>
<dbReference type="EMBL" id="AY086212">
    <property type="protein sequence ID" value="AAM64290.1"/>
    <property type="molecule type" value="mRNA"/>
</dbReference>
<dbReference type="PIR" id="T00556">
    <property type="entry name" value="T00556"/>
</dbReference>
<dbReference type="RefSeq" id="NP_001154565.1">
    <property type="nucleotide sequence ID" value="NM_001161093.2"/>
</dbReference>
<dbReference type="RefSeq" id="NP_181478.1">
    <property type="nucleotide sequence ID" value="NM_129504.4"/>
</dbReference>
<dbReference type="SMR" id="Q8LD46"/>
<dbReference type="BioGRID" id="3869">
    <property type="interactions" value="146"/>
</dbReference>
<dbReference type="FunCoup" id="Q8LD46">
    <property type="interactions" value="2968"/>
</dbReference>
<dbReference type="IntAct" id="Q8LD46">
    <property type="interactions" value="1"/>
</dbReference>
<dbReference type="STRING" id="3702.Q8LD46"/>
<dbReference type="iPTMnet" id="Q8LD46"/>
<dbReference type="MetOSite" id="Q8LD46"/>
<dbReference type="PaxDb" id="3702-AT2G39460.2"/>
<dbReference type="EnsemblPlants" id="AT2G39460.1">
    <property type="protein sequence ID" value="AT2G39460.1"/>
    <property type="gene ID" value="AT2G39460"/>
</dbReference>
<dbReference type="EnsemblPlants" id="AT2G39460.2">
    <property type="protein sequence ID" value="AT2G39460.2"/>
    <property type="gene ID" value="AT2G39460"/>
</dbReference>
<dbReference type="GeneID" id="818531"/>
<dbReference type="Gramene" id="AT2G39460.1">
    <property type="protein sequence ID" value="AT2G39460.1"/>
    <property type="gene ID" value="AT2G39460"/>
</dbReference>
<dbReference type="Gramene" id="AT2G39460.2">
    <property type="protein sequence ID" value="AT2G39460.2"/>
    <property type="gene ID" value="AT2G39460"/>
</dbReference>
<dbReference type="KEGG" id="ath:AT2G39460"/>
<dbReference type="Araport" id="AT2G39460"/>
<dbReference type="TAIR" id="AT2G39460">
    <property type="gene designation" value="RPL23AA"/>
</dbReference>
<dbReference type="eggNOG" id="KOG1751">
    <property type="taxonomic scope" value="Eukaryota"/>
</dbReference>
<dbReference type="HOGENOM" id="CLU_037562_0_2_1"/>
<dbReference type="InParanoid" id="Q8LD46"/>
<dbReference type="OMA" id="AFHIIRY"/>
<dbReference type="OrthoDB" id="1103871at2759"/>
<dbReference type="PhylomeDB" id="Q8LD46"/>
<dbReference type="CD-CODE" id="4299E36E">
    <property type="entry name" value="Nucleolus"/>
</dbReference>
<dbReference type="PRO" id="PR:Q8LD46"/>
<dbReference type="Proteomes" id="UP000006548">
    <property type="component" value="Chromosome 2"/>
</dbReference>
<dbReference type="ExpressionAtlas" id="Q8LD46">
    <property type="expression patterns" value="baseline and differential"/>
</dbReference>
<dbReference type="GO" id="GO:0022625">
    <property type="term" value="C:cytosolic large ribosomal subunit"/>
    <property type="evidence" value="ECO:0007005"/>
    <property type="project" value="TAIR"/>
</dbReference>
<dbReference type="GO" id="GO:0022626">
    <property type="term" value="C:cytosolic ribosome"/>
    <property type="evidence" value="ECO:0007005"/>
    <property type="project" value="TAIR"/>
</dbReference>
<dbReference type="GO" id="GO:0005794">
    <property type="term" value="C:Golgi apparatus"/>
    <property type="evidence" value="ECO:0007005"/>
    <property type="project" value="TAIR"/>
</dbReference>
<dbReference type="GO" id="GO:0005730">
    <property type="term" value="C:nucleolus"/>
    <property type="evidence" value="ECO:0007005"/>
    <property type="project" value="TAIR"/>
</dbReference>
<dbReference type="GO" id="GO:0009505">
    <property type="term" value="C:plant-type cell wall"/>
    <property type="evidence" value="ECO:0007005"/>
    <property type="project" value="TAIR"/>
</dbReference>
<dbReference type="GO" id="GO:0009506">
    <property type="term" value="C:plasmodesma"/>
    <property type="evidence" value="ECO:0007005"/>
    <property type="project" value="TAIR"/>
</dbReference>
<dbReference type="GO" id="GO:0003729">
    <property type="term" value="F:mRNA binding"/>
    <property type="evidence" value="ECO:0000314"/>
    <property type="project" value="TAIR"/>
</dbReference>
<dbReference type="GO" id="GO:0019843">
    <property type="term" value="F:rRNA binding"/>
    <property type="evidence" value="ECO:0007669"/>
    <property type="project" value="UniProtKB-KW"/>
</dbReference>
<dbReference type="GO" id="GO:0003735">
    <property type="term" value="F:structural constituent of ribosome"/>
    <property type="evidence" value="ECO:0000314"/>
    <property type="project" value="CAFA"/>
</dbReference>
<dbReference type="GO" id="GO:0009409">
    <property type="term" value="P:response to cold"/>
    <property type="evidence" value="ECO:0000270"/>
    <property type="project" value="TAIR"/>
</dbReference>
<dbReference type="GO" id="GO:0009644">
    <property type="term" value="P:response to high light intensity"/>
    <property type="evidence" value="ECO:0000270"/>
    <property type="project" value="TAIR"/>
</dbReference>
<dbReference type="GO" id="GO:0006979">
    <property type="term" value="P:response to oxidative stress"/>
    <property type="evidence" value="ECO:0000270"/>
    <property type="project" value="TAIR"/>
</dbReference>
<dbReference type="GO" id="GO:0006412">
    <property type="term" value="P:translation"/>
    <property type="evidence" value="ECO:0007669"/>
    <property type="project" value="InterPro"/>
</dbReference>
<dbReference type="FunFam" id="3.30.70.330:FF:000035">
    <property type="entry name" value="60S ribosomal protein L23a"/>
    <property type="match status" value="1"/>
</dbReference>
<dbReference type="Gene3D" id="3.30.70.330">
    <property type="match status" value="1"/>
</dbReference>
<dbReference type="HAMAP" id="MF_01369_A">
    <property type="entry name" value="Ribosomal_uL23_A"/>
    <property type="match status" value="1"/>
</dbReference>
<dbReference type="InterPro" id="IPR012677">
    <property type="entry name" value="Nucleotide-bd_a/b_plait_sf"/>
</dbReference>
<dbReference type="InterPro" id="IPR019985">
    <property type="entry name" value="Ribosomal_uL23"/>
</dbReference>
<dbReference type="InterPro" id="IPR013025">
    <property type="entry name" value="Ribosomal_uL23-like"/>
</dbReference>
<dbReference type="InterPro" id="IPR012678">
    <property type="entry name" value="Ribosomal_uL23/eL15/eS24_sf"/>
</dbReference>
<dbReference type="InterPro" id="IPR001014">
    <property type="entry name" value="Ribosomal_uL23_CS"/>
</dbReference>
<dbReference type="InterPro" id="IPR005633">
    <property type="entry name" value="Ribosomal_uL23_N"/>
</dbReference>
<dbReference type="NCBIfam" id="NF011118">
    <property type="entry name" value="PRK14548.1"/>
    <property type="match status" value="1"/>
</dbReference>
<dbReference type="NCBIfam" id="TIGR03636">
    <property type="entry name" value="uL23_arch"/>
    <property type="match status" value="1"/>
</dbReference>
<dbReference type="PANTHER" id="PTHR11620">
    <property type="entry name" value="60S RIBOSOMAL PROTEIN L23A"/>
    <property type="match status" value="1"/>
</dbReference>
<dbReference type="Pfam" id="PF00276">
    <property type="entry name" value="Ribosomal_L23"/>
    <property type="match status" value="1"/>
</dbReference>
<dbReference type="Pfam" id="PF03939">
    <property type="entry name" value="Ribosomal_L23eN"/>
    <property type="match status" value="1"/>
</dbReference>
<dbReference type="SUPFAM" id="SSF54189">
    <property type="entry name" value="Ribosomal proteins S24e, L23 and L15e"/>
    <property type="match status" value="1"/>
</dbReference>
<dbReference type="PROSITE" id="PS00050">
    <property type="entry name" value="RIBOSOMAL_L23"/>
    <property type="match status" value="1"/>
</dbReference>
<proteinExistence type="evidence at transcript level"/>
<keyword id="KW-1185">Reference proteome</keyword>
<keyword id="KW-0687">Ribonucleoprotein</keyword>
<keyword id="KW-0689">Ribosomal protein</keyword>
<keyword id="KW-0694">RNA-binding</keyword>
<keyword id="KW-0699">rRNA-binding</keyword>
<accession>Q8LD46</accession>
<accession>O48553</accession>
<accession>O80633</accession>
<protein>
    <recommendedName>
        <fullName evidence="3">Large ribosomal subunit protein uL23z</fullName>
    </recommendedName>
    <alternativeName>
        <fullName>60S ribosomal protein L23a-1</fullName>
        <shortName>AtRPL23A-1</shortName>
    </alternativeName>
</protein>
<gene>
    <name type="primary">RPL23AA</name>
    <name type="ordered locus">At2g39460</name>
    <name type="ORF">F12L6.12</name>
</gene>
<comment type="function">
    <text evidence="1 2">Binds to a specific region on the 26S rRNA.</text>
</comment>
<comment type="similarity">
    <text evidence="4">Belongs to the universal ribosomal protein uL23 family.</text>
</comment>
<evidence type="ECO:0000250" key="1"/>
<evidence type="ECO:0000269" key="2">
    <source>
    </source>
</evidence>
<evidence type="ECO:0000303" key="3">
    <source>
    </source>
</evidence>
<evidence type="ECO:0000305" key="4"/>
<sequence>MSPAKVDTTKKADPKAKALKAAKAVKSGQAFKKKDKKIRTKVTFHRPKTLTKPRTGKYPKISATPRNKLDHYQILKYPLTTESAMKKIEDNNTLVFIVDIRADKKKIKDAVKKMYDIQTKKVNTLIRPDGTKKAYVRLTPDYDALDVANKIGII</sequence>
<feature type="chain" id="PRO_0000129473" description="Large ribosomal subunit protein uL23z">
    <location>
        <begin position="1"/>
        <end position="154"/>
    </location>
</feature>
<feature type="sequence conflict" description="In Ref. 5; AAM64290." evidence="4" ref="5">
    <original>D</original>
    <variation>G</variation>
    <location>
        <position position="35"/>
    </location>
</feature>
<feature type="sequence conflict" description="In Ref. 1; AAB87692." evidence="4" ref="1">
    <original>V</original>
    <variation>M</variation>
    <location>
        <position position="136"/>
    </location>
</feature>